<name>EFP_VIBA3</name>
<dbReference type="EMBL" id="FM954972">
    <property type="protein sequence ID" value="CAV17275.1"/>
    <property type="molecule type" value="Genomic_DNA"/>
</dbReference>
<dbReference type="SMR" id="B7VHR3"/>
<dbReference type="STRING" id="575788.VS_0244"/>
<dbReference type="KEGG" id="vsp:VS_0244"/>
<dbReference type="eggNOG" id="COG0231">
    <property type="taxonomic scope" value="Bacteria"/>
</dbReference>
<dbReference type="HOGENOM" id="CLU_074944_0_0_6"/>
<dbReference type="UniPathway" id="UPA00345"/>
<dbReference type="Proteomes" id="UP000009100">
    <property type="component" value="Chromosome 1"/>
</dbReference>
<dbReference type="GO" id="GO:0005737">
    <property type="term" value="C:cytoplasm"/>
    <property type="evidence" value="ECO:0007669"/>
    <property type="project" value="UniProtKB-SubCell"/>
</dbReference>
<dbReference type="GO" id="GO:0003746">
    <property type="term" value="F:translation elongation factor activity"/>
    <property type="evidence" value="ECO:0007669"/>
    <property type="project" value="UniProtKB-UniRule"/>
</dbReference>
<dbReference type="GO" id="GO:0043043">
    <property type="term" value="P:peptide biosynthetic process"/>
    <property type="evidence" value="ECO:0007669"/>
    <property type="project" value="InterPro"/>
</dbReference>
<dbReference type="CDD" id="cd04470">
    <property type="entry name" value="S1_EF-P_repeat_1"/>
    <property type="match status" value="1"/>
</dbReference>
<dbReference type="CDD" id="cd05794">
    <property type="entry name" value="S1_EF-P_repeat_2"/>
    <property type="match status" value="1"/>
</dbReference>
<dbReference type="FunFam" id="2.30.30.30:FF:000003">
    <property type="entry name" value="Elongation factor P"/>
    <property type="match status" value="1"/>
</dbReference>
<dbReference type="FunFam" id="2.40.50.140:FF:000004">
    <property type="entry name" value="Elongation factor P"/>
    <property type="match status" value="1"/>
</dbReference>
<dbReference type="FunFam" id="2.40.50.140:FF:000009">
    <property type="entry name" value="Elongation factor P"/>
    <property type="match status" value="1"/>
</dbReference>
<dbReference type="Gene3D" id="2.30.30.30">
    <property type="match status" value="1"/>
</dbReference>
<dbReference type="Gene3D" id="2.40.50.140">
    <property type="entry name" value="Nucleic acid-binding proteins"/>
    <property type="match status" value="2"/>
</dbReference>
<dbReference type="HAMAP" id="MF_00141">
    <property type="entry name" value="EF_P"/>
    <property type="match status" value="1"/>
</dbReference>
<dbReference type="InterPro" id="IPR015365">
    <property type="entry name" value="Elong-fact-P_C"/>
</dbReference>
<dbReference type="InterPro" id="IPR012340">
    <property type="entry name" value="NA-bd_OB-fold"/>
</dbReference>
<dbReference type="InterPro" id="IPR014722">
    <property type="entry name" value="Rib_uL2_dom2"/>
</dbReference>
<dbReference type="InterPro" id="IPR020599">
    <property type="entry name" value="Transl_elong_fac_P/YeiP"/>
</dbReference>
<dbReference type="InterPro" id="IPR013185">
    <property type="entry name" value="Transl_elong_KOW-like"/>
</dbReference>
<dbReference type="InterPro" id="IPR001059">
    <property type="entry name" value="Transl_elong_P/YeiP_cen"/>
</dbReference>
<dbReference type="InterPro" id="IPR013852">
    <property type="entry name" value="Transl_elong_P/YeiP_CS"/>
</dbReference>
<dbReference type="InterPro" id="IPR011768">
    <property type="entry name" value="Transl_elongation_fac_P"/>
</dbReference>
<dbReference type="InterPro" id="IPR008991">
    <property type="entry name" value="Translation_prot_SH3-like_sf"/>
</dbReference>
<dbReference type="NCBIfam" id="TIGR00038">
    <property type="entry name" value="efp"/>
    <property type="match status" value="1"/>
</dbReference>
<dbReference type="NCBIfam" id="NF001810">
    <property type="entry name" value="PRK00529.1"/>
    <property type="match status" value="1"/>
</dbReference>
<dbReference type="PANTHER" id="PTHR30053">
    <property type="entry name" value="ELONGATION FACTOR P"/>
    <property type="match status" value="1"/>
</dbReference>
<dbReference type="PANTHER" id="PTHR30053:SF12">
    <property type="entry name" value="ELONGATION FACTOR P (EF-P) FAMILY PROTEIN"/>
    <property type="match status" value="1"/>
</dbReference>
<dbReference type="Pfam" id="PF01132">
    <property type="entry name" value="EFP"/>
    <property type="match status" value="1"/>
</dbReference>
<dbReference type="Pfam" id="PF08207">
    <property type="entry name" value="EFP_N"/>
    <property type="match status" value="1"/>
</dbReference>
<dbReference type="Pfam" id="PF09285">
    <property type="entry name" value="Elong-fact-P_C"/>
    <property type="match status" value="1"/>
</dbReference>
<dbReference type="PIRSF" id="PIRSF005901">
    <property type="entry name" value="EF-P"/>
    <property type="match status" value="1"/>
</dbReference>
<dbReference type="SMART" id="SM01185">
    <property type="entry name" value="EFP"/>
    <property type="match status" value="1"/>
</dbReference>
<dbReference type="SMART" id="SM00841">
    <property type="entry name" value="Elong-fact-P_C"/>
    <property type="match status" value="1"/>
</dbReference>
<dbReference type="SUPFAM" id="SSF50249">
    <property type="entry name" value="Nucleic acid-binding proteins"/>
    <property type="match status" value="2"/>
</dbReference>
<dbReference type="SUPFAM" id="SSF50104">
    <property type="entry name" value="Translation proteins SH3-like domain"/>
    <property type="match status" value="1"/>
</dbReference>
<dbReference type="PROSITE" id="PS01275">
    <property type="entry name" value="EFP"/>
    <property type="match status" value="1"/>
</dbReference>
<comment type="function">
    <text evidence="1">Involved in peptide bond synthesis. Alleviates ribosome stalling that occurs when 3 or more consecutive Pro residues or the sequence PPG is present in a protein, possibly by augmenting the peptidyl transferase activity of the ribosome. Modification of Lys-34 is required for alleviation.</text>
</comment>
<comment type="pathway">
    <text evidence="1">Protein biosynthesis; polypeptide chain elongation.</text>
</comment>
<comment type="subcellular location">
    <subcellularLocation>
        <location evidence="1">Cytoplasm</location>
    </subcellularLocation>
</comment>
<comment type="PTM">
    <text evidence="1">May be beta-lysylated on the epsilon-amino group of Lys-34 by the combined action of EpmA and EpmB, and then hydroxylated on the C5 position of the same residue by EpmC (if this protein is present). Lysylation is critical for the stimulatory effect of EF-P on peptide-bond formation. The lysylation moiety may extend toward the peptidyltransferase center and stabilize the terminal 3-CCA end of the tRNA. Hydroxylation of the C5 position on Lys-34 may allow additional potential stabilizing hydrogen-bond interactions with the P-tRNA.</text>
</comment>
<comment type="similarity">
    <text evidence="1">Belongs to the elongation factor P family.</text>
</comment>
<sequence>MASVSTNEFKGGLKFMLDNEPCAIIDNEYVKPGKGQAFNRVKLRKLLSGKVLEKTFKSGESFELADVVDVELGYLYNDGEFYHFMNNETFEQIAADVKAVADSAKWLVENDVCTLTLWNDNPITVTPPNFVEIEVTETDPGLKGDTQGTGGKPATLATGAVVRVPLFIAIGEVVKVDTRTGEYVGRVK</sequence>
<evidence type="ECO:0000255" key="1">
    <source>
        <dbReference type="HAMAP-Rule" id="MF_00141"/>
    </source>
</evidence>
<proteinExistence type="inferred from homology"/>
<organism>
    <name type="scientific">Vibrio atlanticus (strain LGP32)</name>
    <name type="common">Vibrio splendidus (strain Mel32)</name>
    <dbReference type="NCBI Taxonomy" id="575788"/>
    <lineage>
        <taxon>Bacteria</taxon>
        <taxon>Pseudomonadati</taxon>
        <taxon>Pseudomonadota</taxon>
        <taxon>Gammaproteobacteria</taxon>
        <taxon>Vibrionales</taxon>
        <taxon>Vibrionaceae</taxon>
        <taxon>Vibrio</taxon>
    </lineage>
</organism>
<protein>
    <recommendedName>
        <fullName evidence="1">Elongation factor P</fullName>
        <shortName evidence="1">EF-P</shortName>
    </recommendedName>
</protein>
<accession>B7VHR3</accession>
<feature type="chain" id="PRO_1000123038" description="Elongation factor P">
    <location>
        <begin position="1"/>
        <end position="188"/>
    </location>
</feature>
<feature type="modified residue" description="N6-(3,6-diaminohexanoyl)-5-hydroxylysine" evidence="1">
    <location>
        <position position="34"/>
    </location>
</feature>
<reference key="1">
    <citation type="submission" date="2009-02" db="EMBL/GenBank/DDBJ databases">
        <title>Vibrio splendidus str. LGP32 complete genome.</title>
        <authorList>
            <person name="Mazel D."/>
            <person name="Le Roux F."/>
        </authorList>
    </citation>
    <scope>NUCLEOTIDE SEQUENCE [LARGE SCALE GENOMIC DNA]</scope>
    <source>
        <strain>LGP32</strain>
    </source>
</reference>
<keyword id="KW-0963">Cytoplasm</keyword>
<keyword id="KW-0251">Elongation factor</keyword>
<keyword id="KW-0379">Hydroxylation</keyword>
<keyword id="KW-0648">Protein biosynthesis</keyword>
<gene>
    <name evidence="1" type="primary">efp</name>
    <name type="ordered locus">VS_0244</name>
</gene>